<name>RL21_CLOD6</name>
<keyword id="KW-1185">Reference proteome</keyword>
<keyword id="KW-0687">Ribonucleoprotein</keyword>
<keyword id="KW-0689">Ribosomal protein</keyword>
<keyword id="KW-0694">RNA-binding</keyword>
<keyword id="KW-0699">rRNA-binding</keyword>
<feature type="chain" id="PRO_0000269303" description="Large ribosomal subunit protein bL21">
    <location>
        <begin position="1"/>
        <end position="103"/>
    </location>
</feature>
<organism>
    <name type="scientific">Clostridioides difficile (strain 630)</name>
    <name type="common">Peptoclostridium difficile</name>
    <dbReference type="NCBI Taxonomy" id="272563"/>
    <lineage>
        <taxon>Bacteria</taxon>
        <taxon>Bacillati</taxon>
        <taxon>Bacillota</taxon>
        <taxon>Clostridia</taxon>
        <taxon>Peptostreptococcales</taxon>
        <taxon>Peptostreptococcaceae</taxon>
        <taxon>Clostridioides</taxon>
    </lineage>
</organism>
<reference key="1">
    <citation type="journal article" date="2006" name="Nat. Genet.">
        <title>The multidrug-resistant human pathogen Clostridium difficile has a highly mobile, mosaic genome.</title>
        <authorList>
            <person name="Sebaihia M."/>
            <person name="Wren B.W."/>
            <person name="Mullany P."/>
            <person name="Fairweather N.F."/>
            <person name="Minton N."/>
            <person name="Stabler R."/>
            <person name="Thomson N.R."/>
            <person name="Roberts A.P."/>
            <person name="Cerdeno-Tarraga A.M."/>
            <person name="Wang H."/>
            <person name="Holden M.T.G."/>
            <person name="Wright A."/>
            <person name="Churcher C."/>
            <person name="Quail M.A."/>
            <person name="Baker S."/>
            <person name="Bason N."/>
            <person name="Brooks K."/>
            <person name="Chillingworth T."/>
            <person name="Cronin A."/>
            <person name="Davis P."/>
            <person name="Dowd L."/>
            <person name="Fraser A."/>
            <person name="Feltwell T."/>
            <person name="Hance Z."/>
            <person name="Holroyd S."/>
            <person name="Jagels K."/>
            <person name="Moule S."/>
            <person name="Mungall K."/>
            <person name="Price C."/>
            <person name="Rabbinowitsch E."/>
            <person name="Sharp S."/>
            <person name="Simmonds M."/>
            <person name="Stevens K."/>
            <person name="Unwin L."/>
            <person name="Whithead S."/>
            <person name="Dupuy B."/>
            <person name="Dougan G."/>
            <person name="Barrell B."/>
            <person name="Parkhill J."/>
        </authorList>
    </citation>
    <scope>NUCLEOTIDE SEQUENCE [LARGE SCALE GENOMIC DNA]</scope>
    <source>
        <strain>630</strain>
    </source>
</reference>
<comment type="function">
    <text evidence="1">This protein binds to 23S rRNA in the presence of protein L20.</text>
</comment>
<comment type="subunit">
    <text evidence="1">Part of the 50S ribosomal subunit. Contacts protein L20.</text>
</comment>
<comment type="similarity">
    <text evidence="1">Belongs to the bacterial ribosomal protein bL21 family.</text>
</comment>
<evidence type="ECO:0000255" key="1">
    <source>
        <dbReference type="HAMAP-Rule" id="MF_01363"/>
    </source>
</evidence>
<evidence type="ECO:0000305" key="2"/>
<protein>
    <recommendedName>
        <fullName evidence="1">Large ribosomal subunit protein bL21</fullName>
    </recommendedName>
    <alternativeName>
        <fullName evidence="2">50S ribosomal protein L21</fullName>
    </alternativeName>
</protein>
<accession>Q18B24</accession>
<dbReference type="EMBL" id="AM180355">
    <property type="protein sequence ID" value="CAJ68014.1"/>
    <property type="molecule type" value="Genomic_DNA"/>
</dbReference>
<dbReference type="RefSeq" id="WP_003419082.1">
    <property type="nucleotide sequence ID" value="NZ_JAUPES010000006.1"/>
</dbReference>
<dbReference type="RefSeq" id="YP_001087653.1">
    <property type="nucleotide sequence ID" value="NC_009089.1"/>
</dbReference>
<dbReference type="SMR" id="Q18B24"/>
<dbReference type="STRING" id="272563.CD630_11610"/>
<dbReference type="EnsemblBacteria" id="CAJ68014">
    <property type="protein sequence ID" value="CAJ68014"/>
    <property type="gene ID" value="CD630_11610"/>
</dbReference>
<dbReference type="GeneID" id="66353571"/>
<dbReference type="KEGG" id="cdf:CD630_11610"/>
<dbReference type="KEGG" id="pdc:CDIF630_01308"/>
<dbReference type="PATRIC" id="fig|272563.120.peg.1211"/>
<dbReference type="eggNOG" id="COG0261">
    <property type="taxonomic scope" value="Bacteria"/>
</dbReference>
<dbReference type="OrthoDB" id="9813334at2"/>
<dbReference type="PhylomeDB" id="Q18B24"/>
<dbReference type="BioCyc" id="PDIF272563:G12WB-1291-MONOMER"/>
<dbReference type="Proteomes" id="UP000001978">
    <property type="component" value="Chromosome"/>
</dbReference>
<dbReference type="GO" id="GO:0005737">
    <property type="term" value="C:cytoplasm"/>
    <property type="evidence" value="ECO:0007669"/>
    <property type="project" value="UniProtKB-ARBA"/>
</dbReference>
<dbReference type="GO" id="GO:1990904">
    <property type="term" value="C:ribonucleoprotein complex"/>
    <property type="evidence" value="ECO:0007669"/>
    <property type="project" value="UniProtKB-KW"/>
</dbReference>
<dbReference type="GO" id="GO:0005840">
    <property type="term" value="C:ribosome"/>
    <property type="evidence" value="ECO:0007669"/>
    <property type="project" value="UniProtKB-KW"/>
</dbReference>
<dbReference type="GO" id="GO:0019843">
    <property type="term" value="F:rRNA binding"/>
    <property type="evidence" value="ECO:0007669"/>
    <property type="project" value="UniProtKB-UniRule"/>
</dbReference>
<dbReference type="GO" id="GO:0003735">
    <property type="term" value="F:structural constituent of ribosome"/>
    <property type="evidence" value="ECO:0007669"/>
    <property type="project" value="InterPro"/>
</dbReference>
<dbReference type="GO" id="GO:0006412">
    <property type="term" value="P:translation"/>
    <property type="evidence" value="ECO:0007669"/>
    <property type="project" value="UniProtKB-UniRule"/>
</dbReference>
<dbReference type="HAMAP" id="MF_01363">
    <property type="entry name" value="Ribosomal_bL21"/>
    <property type="match status" value="1"/>
</dbReference>
<dbReference type="InterPro" id="IPR028909">
    <property type="entry name" value="bL21-like"/>
</dbReference>
<dbReference type="InterPro" id="IPR036164">
    <property type="entry name" value="bL21-like_sf"/>
</dbReference>
<dbReference type="InterPro" id="IPR001787">
    <property type="entry name" value="Ribosomal_bL21"/>
</dbReference>
<dbReference type="InterPro" id="IPR018258">
    <property type="entry name" value="Ribosomal_bL21_CS"/>
</dbReference>
<dbReference type="NCBIfam" id="TIGR00061">
    <property type="entry name" value="L21"/>
    <property type="match status" value="1"/>
</dbReference>
<dbReference type="PANTHER" id="PTHR21349">
    <property type="entry name" value="50S RIBOSOMAL PROTEIN L21"/>
    <property type="match status" value="1"/>
</dbReference>
<dbReference type="PANTHER" id="PTHR21349:SF0">
    <property type="entry name" value="LARGE RIBOSOMAL SUBUNIT PROTEIN BL21M"/>
    <property type="match status" value="1"/>
</dbReference>
<dbReference type="Pfam" id="PF00829">
    <property type="entry name" value="Ribosomal_L21p"/>
    <property type="match status" value="1"/>
</dbReference>
<dbReference type="SUPFAM" id="SSF141091">
    <property type="entry name" value="L21p-like"/>
    <property type="match status" value="1"/>
</dbReference>
<dbReference type="PROSITE" id="PS01169">
    <property type="entry name" value="RIBOSOMAL_L21"/>
    <property type="match status" value="1"/>
</dbReference>
<sequence length="103" mass="11330">MYAIVKTGGKQYKVSEGDVLFVEKLEANAGDVVTLNEVLACSKDGELKLGSPVVEGASVQAKVVEQGKAKKVIVFKYKAKKDYRRKQGHRQSYTKIVVEKINA</sequence>
<gene>
    <name evidence="1" type="primary">rplU</name>
    <name type="ordered locus">CD630_11610</name>
</gene>
<proteinExistence type="inferred from homology"/>